<reference key="1">
    <citation type="journal article" date="1997" name="Nature">
        <title>The complete genome sequence of the Gram-positive bacterium Bacillus subtilis.</title>
        <authorList>
            <person name="Kunst F."/>
            <person name="Ogasawara N."/>
            <person name="Moszer I."/>
            <person name="Albertini A.M."/>
            <person name="Alloni G."/>
            <person name="Azevedo V."/>
            <person name="Bertero M.G."/>
            <person name="Bessieres P."/>
            <person name="Bolotin A."/>
            <person name="Borchert S."/>
            <person name="Borriss R."/>
            <person name="Boursier L."/>
            <person name="Brans A."/>
            <person name="Braun M."/>
            <person name="Brignell S.C."/>
            <person name="Bron S."/>
            <person name="Brouillet S."/>
            <person name="Bruschi C.V."/>
            <person name="Caldwell B."/>
            <person name="Capuano V."/>
            <person name="Carter N.M."/>
            <person name="Choi S.-K."/>
            <person name="Codani J.-J."/>
            <person name="Connerton I.F."/>
            <person name="Cummings N.J."/>
            <person name="Daniel R.A."/>
            <person name="Denizot F."/>
            <person name="Devine K.M."/>
            <person name="Duesterhoeft A."/>
            <person name="Ehrlich S.D."/>
            <person name="Emmerson P.T."/>
            <person name="Entian K.-D."/>
            <person name="Errington J."/>
            <person name="Fabret C."/>
            <person name="Ferrari E."/>
            <person name="Foulger D."/>
            <person name="Fritz C."/>
            <person name="Fujita M."/>
            <person name="Fujita Y."/>
            <person name="Fuma S."/>
            <person name="Galizzi A."/>
            <person name="Galleron N."/>
            <person name="Ghim S.-Y."/>
            <person name="Glaser P."/>
            <person name="Goffeau A."/>
            <person name="Golightly E.J."/>
            <person name="Grandi G."/>
            <person name="Guiseppi G."/>
            <person name="Guy B.J."/>
            <person name="Haga K."/>
            <person name="Haiech J."/>
            <person name="Harwood C.R."/>
            <person name="Henaut A."/>
            <person name="Hilbert H."/>
            <person name="Holsappel S."/>
            <person name="Hosono S."/>
            <person name="Hullo M.-F."/>
            <person name="Itaya M."/>
            <person name="Jones L.-M."/>
            <person name="Joris B."/>
            <person name="Karamata D."/>
            <person name="Kasahara Y."/>
            <person name="Klaerr-Blanchard M."/>
            <person name="Klein C."/>
            <person name="Kobayashi Y."/>
            <person name="Koetter P."/>
            <person name="Koningstein G."/>
            <person name="Krogh S."/>
            <person name="Kumano M."/>
            <person name="Kurita K."/>
            <person name="Lapidus A."/>
            <person name="Lardinois S."/>
            <person name="Lauber J."/>
            <person name="Lazarevic V."/>
            <person name="Lee S.-M."/>
            <person name="Levine A."/>
            <person name="Liu H."/>
            <person name="Masuda S."/>
            <person name="Mauel C."/>
            <person name="Medigue C."/>
            <person name="Medina N."/>
            <person name="Mellado R.P."/>
            <person name="Mizuno M."/>
            <person name="Moestl D."/>
            <person name="Nakai S."/>
            <person name="Noback M."/>
            <person name="Noone D."/>
            <person name="O'Reilly M."/>
            <person name="Ogawa K."/>
            <person name="Ogiwara A."/>
            <person name="Oudega B."/>
            <person name="Park S.-H."/>
            <person name="Parro V."/>
            <person name="Pohl T.M."/>
            <person name="Portetelle D."/>
            <person name="Porwollik S."/>
            <person name="Prescott A.M."/>
            <person name="Presecan E."/>
            <person name="Pujic P."/>
            <person name="Purnelle B."/>
            <person name="Rapoport G."/>
            <person name="Rey M."/>
            <person name="Reynolds S."/>
            <person name="Rieger M."/>
            <person name="Rivolta C."/>
            <person name="Rocha E."/>
            <person name="Roche B."/>
            <person name="Rose M."/>
            <person name="Sadaie Y."/>
            <person name="Sato T."/>
            <person name="Scanlan E."/>
            <person name="Schleich S."/>
            <person name="Schroeter R."/>
            <person name="Scoffone F."/>
            <person name="Sekiguchi J."/>
            <person name="Sekowska A."/>
            <person name="Seror S.J."/>
            <person name="Serror P."/>
            <person name="Shin B.-S."/>
            <person name="Soldo B."/>
            <person name="Sorokin A."/>
            <person name="Tacconi E."/>
            <person name="Takagi T."/>
            <person name="Takahashi H."/>
            <person name="Takemaru K."/>
            <person name="Takeuchi M."/>
            <person name="Tamakoshi A."/>
            <person name="Tanaka T."/>
            <person name="Terpstra P."/>
            <person name="Tognoni A."/>
            <person name="Tosato V."/>
            <person name="Uchiyama S."/>
            <person name="Vandenbol M."/>
            <person name="Vannier F."/>
            <person name="Vassarotti A."/>
            <person name="Viari A."/>
            <person name="Wambutt R."/>
            <person name="Wedler E."/>
            <person name="Wedler H."/>
            <person name="Weitzenegger T."/>
            <person name="Winters P."/>
            <person name="Wipat A."/>
            <person name="Yamamoto H."/>
            <person name="Yamane K."/>
            <person name="Yasumoto K."/>
            <person name="Yata K."/>
            <person name="Yoshida K."/>
            <person name="Yoshikawa H.-F."/>
            <person name="Zumstein E."/>
            <person name="Yoshikawa H."/>
            <person name="Danchin A."/>
        </authorList>
    </citation>
    <scope>NUCLEOTIDE SEQUENCE [LARGE SCALE GENOMIC DNA]</scope>
    <source>
        <strain>168</strain>
    </source>
</reference>
<dbReference type="EMBL" id="AL009126">
    <property type="protein sequence ID" value="CAX52594.1"/>
    <property type="molecule type" value="Genomic_DNA"/>
</dbReference>
<dbReference type="RefSeq" id="WP_003244769.1">
    <property type="nucleotide sequence ID" value="NZ_OZ025638.1"/>
</dbReference>
<dbReference type="RefSeq" id="YP_003097704.1">
    <property type="nucleotide sequence ID" value="NC_000964.3"/>
</dbReference>
<dbReference type="SMR" id="C0H3Y7"/>
<dbReference type="FunCoup" id="C0H3Y7">
    <property type="interactions" value="6"/>
</dbReference>
<dbReference type="STRING" id="224308.BSU11799"/>
<dbReference type="PaxDb" id="224308-BSU11799"/>
<dbReference type="EnsemblBacteria" id="CAX52594">
    <property type="protein sequence ID" value="CAX52594"/>
    <property type="gene ID" value="BSU_11799"/>
</dbReference>
<dbReference type="GeneID" id="8303173"/>
<dbReference type="KEGG" id="bsu:BSU11799"/>
<dbReference type="PATRIC" id="fig|224308.179.peg.1270"/>
<dbReference type="InParanoid" id="C0H3Y7"/>
<dbReference type="OrthoDB" id="2917016at2"/>
<dbReference type="BioCyc" id="BSUB:BSU11799-MONOMER"/>
<dbReference type="Proteomes" id="UP000001570">
    <property type="component" value="Chromosome"/>
</dbReference>
<sequence>MNEFEKWIEGRYEPHEQKQKEHEDTMGSIRKDLDAFDKAGLEFEDEIEELAEKTEALLKKHQAQYDQS</sequence>
<protein>
    <recommendedName>
        <fullName>Uncharacterized protein YjzK</fullName>
    </recommendedName>
</protein>
<evidence type="ECO:0000256" key="1">
    <source>
        <dbReference type="SAM" id="MobiDB-lite"/>
    </source>
</evidence>
<keyword id="KW-1185">Reference proteome</keyword>
<name>YJZK_BACSU</name>
<accession>C0H3Y7</accession>
<feature type="chain" id="PRO_0000382663" description="Uncharacterized protein YjzK">
    <location>
        <begin position="1"/>
        <end position="68"/>
    </location>
</feature>
<feature type="region of interest" description="Disordered" evidence="1">
    <location>
        <begin position="1"/>
        <end position="27"/>
    </location>
</feature>
<proteinExistence type="predicted"/>
<gene>
    <name type="primary">yjzK</name>
    <name type="ordered locus">BSU11799</name>
</gene>
<organism>
    <name type="scientific">Bacillus subtilis (strain 168)</name>
    <dbReference type="NCBI Taxonomy" id="224308"/>
    <lineage>
        <taxon>Bacteria</taxon>
        <taxon>Bacillati</taxon>
        <taxon>Bacillota</taxon>
        <taxon>Bacilli</taxon>
        <taxon>Bacillales</taxon>
        <taxon>Bacillaceae</taxon>
        <taxon>Bacillus</taxon>
    </lineage>
</organism>